<keyword id="KW-0002">3D-structure</keyword>
<keyword id="KW-0067">ATP-binding</keyword>
<keyword id="KW-0227">DNA damage</keyword>
<keyword id="KW-0233">DNA recombination</keyword>
<keyword id="KW-0238">DNA-binding</keyword>
<keyword id="KW-0547">Nucleotide-binding</keyword>
<reference key="1">
    <citation type="submission" date="1997-06" db="EMBL/GenBank/DDBJ databases">
        <title>The RadA protein from the archaeon Methanococcus voltae: a functional homolog of eukaryotic Rad51.</title>
        <authorList>
            <person name="Reich C.I."/>
            <person name="Buldak G.L."/>
            <person name="McNeil L.K."/>
        </authorList>
    </citation>
    <scope>NUCLEOTIDE SEQUENCE [GENOMIC DNA]</scope>
    <source>
        <strain>ATCC 33273 / DSM 1537 / NBRC 100457 / OCM 70 / PS</strain>
    </source>
</reference>
<reference key="2">
    <citation type="journal article" date="1999" name="J. Bacteriol.">
        <title>Diversity of radA genes from cultured and uncultured archaea: comparative analysis of putative RadA proteins and their use as a phylogenetic marker.</title>
        <authorList>
            <person name="Sandler S.J."/>
            <person name="Hugenholtz P."/>
            <person name="Schleper C."/>
            <person name="DeLong E.F."/>
            <person name="Pace N.R."/>
            <person name="Clark A.J."/>
        </authorList>
    </citation>
    <scope>NUCLEOTIDE SEQUENCE [GENOMIC DNA] OF 112-254</scope>
</reference>
<evidence type="ECO:0000250" key="1"/>
<evidence type="ECO:0000255" key="2"/>
<evidence type="ECO:0000305" key="3"/>
<evidence type="ECO:0007829" key="4">
    <source>
        <dbReference type="PDB" id="1XU4"/>
    </source>
</evidence>
<evidence type="ECO:0007829" key="5">
    <source>
        <dbReference type="PDB" id="2I1Q"/>
    </source>
</evidence>
<evidence type="ECO:0007829" key="6">
    <source>
        <dbReference type="PDB" id="3FYH"/>
    </source>
</evidence>
<evidence type="ECO:0007829" key="7">
    <source>
        <dbReference type="PDB" id="3NTU"/>
    </source>
</evidence>
<evidence type="ECO:0007829" key="8">
    <source>
        <dbReference type="PDB" id="4DC9"/>
    </source>
</evidence>
<evidence type="ECO:0007829" key="9">
    <source>
        <dbReference type="PDB" id="4QKQ"/>
    </source>
</evidence>
<organism>
    <name type="scientific">Methanococcus voltae</name>
    <dbReference type="NCBI Taxonomy" id="2188"/>
    <lineage>
        <taxon>Archaea</taxon>
        <taxon>Methanobacteriati</taxon>
        <taxon>Methanobacteriota</taxon>
        <taxon>Methanomada group</taxon>
        <taxon>Methanococci</taxon>
        <taxon>Methanococcales</taxon>
        <taxon>Methanococcaceae</taxon>
        <taxon>Methanococcus</taxon>
    </lineage>
</organism>
<feature type="chain" id="PRO_0000150099" description="DNA repair and recombination protein RadA">
    <location>
        <begin position="1"/>
        <end position="322"/>
    </location>
</feature>
<feature type="binding site" evidence="2">
    <location>
        <begin position="105"/>
        <end position="112"/>
    </location>
    <ligand>
        <name>ATP</name>
        <dbReference type="ChEBI" id="CHEBI:30616"/>
    </ligand>
</feature>
<feature type="helix" evidence="7">
    <location>
        <begin position="5"/>
        <end position="7"/>
    </location>
</feature>
<feature type="helix" evidence="5">
    <location>
        <begin position="13"/>
        <end position="22"/>
    </location>
</feature>
<feature type="helix" evidence="5">
    <location>
        <begin position="27"/>
        <end position="31"/>
    </location>
</feature>
<feature type="helix" evidence="5">
    <location>
        <begin position="35"/>
        <end position="39"/>
    </location>
</feature>
<feature type="strand" evidence="6">
    <location>
        <begin position="42"/>
        <end position="44"/>
    </location>
</feature>
<feature type="helix" evidence="5">
    <location>
        <begin position="46"/>
        <end position="59"/>
    </location>
</feature>
<feature type="turn" evidence="8">
    <location>
        <begin position="61"/>
        <end position="63"/>
    </location>
</feature>
<feature type="helix" evidence="5">
    <location>
        <begin position="68"/>
        <end position="74"/>
    </location>
</feature>
<feature type="helix" evidence="5">
    <location>
        <begin position="85"/>
        <end position="90"/>
    </location>
</feature>
<feature type="strand" evidence="5">
    <location>
        <begin position="93"/>
        <end position="96"/>
    </location>
</feature>
<feature type="strand" evidence="5">
    <location>
        <begin position="99"/>
        <end position="106"/>
    </location>
</feature>
<feature type="helix" evidence="5">
    <location>
        <begin position="111"/>
        <end position="121"/>
    </location>
</feature>
<feature type="helix" evidence="5">
    <location>
        <begin position="125"/>
        <end position="127"/>
    </location>
</feature>
<feature type="turn" evidence="5">
    <location>
        <begin position="132"/>
        <end position="134"/>
    </location>
</feature>
<feature type="turn" evidence="5">
    <location>
        <begin position="137"/>
        <end position="140"/>
    </location>
</feature>
<feature type="strand" evidence="5">
    <location>
        <begin position="141"/>
        <end position="152"/>
    </location>
</feature>
<feature type="helix" evidence="5">
    <location>
        <begin position="156"/>
        <end position="166"/>
    </location>
</feature>
<feature type="helix" evidence="5">
    <location>
        <begin position="170"/>
        <end position="175"/>
    </location>
</feature>
<feature type="strand" evidence="5">
    <location>
        <begin position="177"/>
        <end position="181"/>
    </location>
</feature>
<feature type="helix" evidence="5">
    <location>
        <begin position="185"/>
        <end position="193"/>
    </location>
</feature>
<feature type="helix" evidence="5">
    <location>
        <begin position="195"/>
        <end position="200"/>
    </location>
</feature>
<feature type="strand" evidence="5">
    <location>
        <begin position="204"/>
        <end position="211"/>
    </location>
</feature>
<feature type="helix" evidence="5">
    <location>
        <begin position="215"/>
        <end position="220"/>
    </location>
</feature>
<feature type="turn" evidence="9">
    <location>
        <begin position="224"/>
        <end position="226"/>
    </location>
</feature>
<feature type="helix" evidence="5">
    <location>
        <begin position="227"/>
        <end position="247"/>
    </location>
</feature>
<feature type="strand" evidence="5">
    <location>
        <begin position="251"/>
        <end position="256"/>
    </location>
</feature>
<feature type="strand" evidence="7">
    <location>
        <begin position="258"/>
        <end position="260"/>
    </location>
</feature>
<feature type="strand" evidence="4">
    <location>
        <begin position="265"/>
        <end position="267"/>
    </location>
</feature>
<feature type="strand" evidence="5">
    <location>
        <begin position="271"/>
        <end position="274"/>
    </location>
</feature>
<feature type="helix" evidence="5">
    <location>
        <begin position="275"/>
        <end position="281"/>
    </location>
</feature>
<feature type="strand" evidence="5">
    <location>
        <begin position="283"/>
        <end position="290"/>
    </location>
</feature>
<feature type="strand" evidence="5">
    <location>
        <begin position="295"/>
        <end position="302"/>
    </location>
</feature>
<feature type="strand" evidence="5">
    <location>
        <begin position="304"/>
        <end position="306"/>
    </location>
</feature>
<feature type="strand" evidence="5">
    <location>
        <begin position="309"/>
        <end position="316"/>
    </location>
</feature>
<feature type="strand" evidence="5">
    <location>
        <begin position="319"/>
        <end position="321"/>
    </location>
</feature>
<dbReference type="EMBL" id="AF008421">
    <property type="protein sequence ID" value="AAC23499.1"/>
    <property type="molecule type" value="Genomic_DNA"/>
</dbReference>
<dbReference type="EMBL" id="AF090200">
    <property type="protein sequence ID" value="AAD16066.1"/>
    <property type="molecule type" value="Genomic_DNA"/>
</dbReference>
<dbReference type="PDB" id="1T4G">
    <property type="method" value="X-ray"/>
    <property type="resolution" value="2.00 A"/>
    <property type="chains" value="A=1-322"/>
</dbReference>
<dbReference type="PDB" id="1XU4">
    <property type="method" value="X-ray"/>
    <property type="resolution" value="2.40 A"/>
    <property type="chains" value="A=1-322"/>
</dbReference>
<dbReference type="PDB" id="2B21">
    <property type="method" value="X-ray"/>
    <property type="resolution" value="2.40 A"/>
    <property type="chains" value="A=1-322"/>
</dbReference>
<dbReference type="PDB" id="2F1H">
    <property type="method" value="X-ray"/>
    <property type="resolution" value="2.70 A"/>
    <property type="chains" value="A=1-322"/>
</dbReference>
<dbReference type="PDB" id="2F1I">
    <property type="method" value="X-ray"/>
    <property type="resolution" value="2.90 A"/>
    <property type="chains" value="A=1-322"/>
</dbReference>
<dbReference type="PDB" id="2F1J">
    <property type="method" value="X-ray"/>
    <property type="resolution" value="2.30 A"/>
    <property type="chains" value="A=1-322"/>
</dbReference>
<dbReference type="PDB" id="2FPK">
    <property type="method" value="X-ray"/>
    <property type="resolution" value="2.10 A"/>
    <property type="chains" value="A=1-322"/>
</dbReference>
<dbReference type="PDB" id="2FPL">
    <property type="method" value="X-ray"/>
    <property type="resolution" value="2.30 A"/>
    <property type="chains" value="A=1-322"/>
</dbReference>
<dbReference type="PDB" id="2FPM">
    <property type="method" value="X-ray"/>
    <property type="resolution" value="2.00 A"/>
    <property type="chains" value="A=1-322"/>
</dbReference>
<dbReference type="PDB" id="2GDJ">
    <property type="method" value="X-ray"/>
    <property type="resolution" value="2.50 A"/>
    <property type="chains" value="A=63-322"/>
</dbReference>
<dbReference type="PDB" id="2I1Q">
    <property type="method" value="X-ray"/>
    <property type="resolution" value="1.90 A"/>
    <property type="chains" value="A=1-322"/>
</dbReference>
<dbReference type="PDB" id="3FYH">
    <property type="method" value="X-ray"/>
    <property type="resolution" value="1.90 A"/>
    <property type="chains" value="A=1-322"/>
</dbReference>
<dbReference type="PDB" id="3NTU">
    <property type="method" value="X-ray"/>
    <property type="resolution" value="1.90 A"/>
    <property type="chains" value="A=4-322"/>
</dbReference>
<dbReference type="PDB" id="4DC9">
    <property type="method" value="X-ray"/>
    <property type="resolution" value="2.60 A"/>
    <property type="chains" value="A/B/C/D/E/F=61-322"/>
</dbReference>
<dbReference type="PDB" id="4QKQ">
    <property type="method" value="X-ray"/>
    <property type="resolution" value="2.00 A"/>
    <property type="chains" value="A/B/C/D/E/F/G/H/I/J/K/L=61-322"/>
</dbReference>
<dbReference type="PDBsum" id="1T4G"/>
<dbReference type="PDBsum" id="1XU4"/>
<dbReference type="PDBsum" id="2B21"/>
<dbReference type="PDBsum" id="2F1H"/>
<dbReference type="PDBsum" id="2F1I"/>
<dbReference type="PDBsum" id="2F1J"/>
<dbReference type="PDBsum" id="2FPK"/>
<dbReference type="PDBsum" id="2FPL"/>
<dbReference type="PDBsum" id="2FPM"/>
<dbReference type="PDBsum" id="2GDJ"/>
<dbReference type="PDBsum" id="2I1Q"/>
<dbReference type="PDBsum" id="3FYH"/>
<dbReference type="PDBsum" id="3NTU"/>
<dbReference type="PDBsum" id="4DC9"/>
<dbReference type="PDBsum" id="4QKQ"/>
<dbReference type="SMR" id="O73948"/>
<dbReference type="DIP" id="DIP-29120N"/>
<dbReference type="OrthoDB" id="31129at2157"/>
<dbReference type="BRENDA" id="3.6.4.B7">
    <property type="organism ID" value="3268"/>
</dbReference>
<dbReference type="EvolutionaryTrace" id="O73948"/>
<dbReference type="GO" id="GO:0005524">
    <property type="term" value="F:ATP binding"/>
    <property type="evidence" value="ECO:0007669"/>
    <property type="project" value="UniProtKB-UniRule"/>
</dbReference>
<dbReference type="GO" id="GO:0016887">
    <property type="term" value="F:ATP hydrolysis activity"/>
    <property type="evidence" value="ECO:0007669"/>
    <property type="project" value="InterPro"/>
</dbReference>
<dbReference type="GO" id="GO:0140664">
    <property type="term" value="F:ATP-dependent DNA damage sensor activity"/>
    <property type="evidence" value="ECO:0007669"/>
    <property type="project" value="InterPro"/>
</dbReference>
<dbReference type="GO" id="GO:0003684">
    <property type="term" value="F:damaged DNA binding"/>
    <property type="evidence" value="ECO:0007669"/>
    <property type="project" value="UniProtKB-UniRule"/>
</dbReference>
<dbReference type="GO" id="GO:0042802">
    <property type="term" value="F:identical protein binding"/>
    <property type="evidence" value="ECO:0000353"/>
    <property type="project" value="IntAct"/>
</dbReference>
<dbReference type="GO" id="GO:0006310">
    <property type="term" value="P:DNA recombination"/>
    <property type="evidence" value="ECO:0007669"/>
    <property type="project" value="UniProtKB-UniRule"/>
</dbReference>
<dbReference type="GO" id="GO:0006281">
    <property type="term" value="P:DNA repair"/>
    <property type="evidence" value="ECO:0007669"/>
    <property type="project" value="UniProtKB-UniRule"/>
</dbReference>
<dbReference type="CDD" id="cd19515">
    <property type="entry name" value="archRadA"/>
    <property type="match status" value="1"/>
</dbReference>
<dbReference type="FunFam" id="3.40.50.300:FF:004845">
    <property type="entry name" value="DNA repair and recombination protein RadA"/>
    <property type="match status" value="1"/>
</dbReference>
<dbReference type="Gene3D" id="1.10.150.20">
    <property type="entry name" value="5' to 3' exonuclease, C-terminal subdomain"/>
    <property type="match status" value="1"/>
</dbReference>
<dbReference type="Gene3D" id="3.40.50.300">
    <property type="entry name" value="P-loop containing nucleotide triphosphate hydrolases"/>
    <property type="match status" value="1"/>
</dbReference>
<dbReference type="HAMAP" id="MF_00348">
    <property type="entry name" value="RadA_arch"/>
    <property type="match status" value="1"/>
</dbReference>
<dbReference type="InterPro" id="IPR003593">
    <property type="entry name" value="AAA+_ATPase"/>
</dbReference>
<dbReference type="InterPro" id="IPR013632">
    <property type="entry name" value="DNA_recomb/repair_Rad51_C"/>
</dbReference>
<dbReference type="InterPro" id="IPR011938">
    <property type="entry name" value="DNA_recomb/repair_RadA"/>
</dbReference>
<dbReference type="InterPro" id="IPR016467">
    <property type="entry name" value="DNA_recomb/repair_RecA-like"/>
</dbReference>
<dbReference type="InterPro" id="IPR010995">
    <property type="entry name" value="DNA_repair_Rad51/TF_NusA_a-hlx"/>
</dbReference>
<dbReference type="InterPro" id="IPR003583">
    <property type="entry name" value="Hlx-hairpin-Hlx_DNA-bd_motif"/>
</dbReference>
<dbReference type="InterPro" id="IPR027417">
    <property type="entry name" value="P-loop_NTPase"/>
</dbReference>
<dbReference type="InterPro" id="IPR020588">
    <property type="entry name" value="RecA_ATP-bd"/>
</dbReference>
<dbReference type="InterPro" id="IPR020587">
    <property type="entry name" value="RecA_monomer-monomer_interface"/>
</dbReference>
<dbReference type="NCBIfam" id="NF003301">
    <property type="entry name" value="PRK04301.1"/>
    <property type="match status" value="1"/>
</dbReference>
<dbReference type="NCBIfam" id="TIGR02236">
    <property type="entry name" value="recomb_radA"/>
    <property type="match status" value="1"/>
</dbReference>
<dbReference type="PANTHER" id="PTHR22942:SF30">
    <property type="entry name" value="MEIOTIC RECOMBINATION PROTEIN DMC1_LIM15 HOMOLOG"/>
    <property type="match status" value="1"/>
</dbReference>
<dbReference type="PANTHER" id="PTHR22942">
    <property type="entry name" value="RECA/RAD51/RADA DNA STRAND-PAIRING FAMILY MEMBER"/>
    <property type="match status" value="1"/>
</dbReference>
<dbReference type="Pfam" id="PF14520">
    <property type="entry name" value="HHH_5"/>
    <property type="match status" value="1"/>
</dbReference>
<dbReference type="Pfam" id="PF08423">
    <property type="entry name" value="Rad51"/>
    <property type="match status" value="1"/>
</dbReference>
<dbReference type="PIRSF" id="PIRSF005856">
    <property type="entry name" value="Rad51"/>
    <property type="match status" value="1"/>
</dbReference>
<dbReference type="SMART" id="SM00382">
    <property type="entry name" value="AAA"/>
    <property type="match status" value="1"/>
</dbReference>
<dbReference type="SMART" id="SM00278">
    <property type="entry name" value="HhH1"/>
    <property type="match status" value="2"/>
</dbReference>
<dbReference type="SUPFAM" id="SSF52540">
    <property type="entry name" value="P-loop containing nucleoside triphosphate hydrolases"/>
    <property type="match status" value="1"/>
</dbReference>
<dbReference type="SUPFAM" id="SSF47794">
    <property type="entry name" value="Rad51 N-terminal domain-like"/>
    <property type="match status" value="1"/>
</dbReference>
<dbReference type="PROSITE" id="PS50162">
    <property type="entry name" value="RECA_2"/>
    <property type="match status" value="1"/>
</dbReference>
<dbReference type="PROSITE" id="PS50163">
    <property type="entry name" value="RECA_3"/>
    <property type="match status" value="1"/>
</dbReference>
<gene>
    <name type="primary">radA</name>
</gene>
<accession>O73948</accession>
<comment type="function">
    <text evidence="1">Involved in DNA repair and in homologous recombination. Binds and assemble on single-stranded DNA to form a nucleoprotein filament. Hydrolyzes ATP in a ssDNA-dependent manner and promotes DNA strand exchange between homologous DNA molecules (By similarity).</text>
</comment>
<comment type="interaction">
    <interactant intactId="EBI-15585834">
        <id>O73948</id>
    </interactant>
    <interactant intactId="EBI-15585834">
        <id>O73948</id>
        <label>radA</label>
    </interactant>
    <organismsDiffer>false</organismsDiffer>
    <experiments>2</experiments>
</comment>
<comment type="similarity">
    <text evidence="3">Belongs to the eukaryotic RecA-like protein family.</text>
</comment>
<proteinExistence type="evidence at protein level"/>
<name>RADA_METVO</name>
<sequence length="322" mass="35189">MSDNLTDLPGVGPSTAEKLVEAGYIDFMKIATATVGELTDIEGISEKAAAKMIMGARDLCDLGFKSGIDLLKQRSTVWKLSTSSSELDSVLGGGLESQSVTEFAGVFGSGKTQIMHQSCVNLQNPEFLFYDEEAVSKGEVAQPKAVYIDTEGTFRPERIMQMAEHAGIDGQTVLDNTFVARAYNSDMQMLFAEKIEDLIQEGNNIKLVVIDSLTSTFRNEYTGRGKLAERQQKLGRHMATLNKLADLFNCVVLVTNQVSAKPDAFFGMAEQAIGGHIVGHAATFRFFVRKGKGDKRVAKLYDSPHLPDAEAIFRITEKGIQD</sequence>
<protein>
    <recommendedName>
        <fullName>DNA repair and recombination protein RadA</fullName>
    </recommendedName>
</protein>